<organism>
    <name type="scientific">Aspergillus fumigatus (strain ATCC MYA-4609 / CBS 101355 / FGSC A1100 / Af293)</name>
    <name type="common">Neosartorya fumigata</name>
    <dbReference type="NCBI Taxonomy" id="330879"/>
    <lineage>
        <taxon>Eukaryota</taxon>
        <taxon>Fungi</taxon>
        <taxon>Dikarya</taxon>
        <taxon>Ascomycota</taxon>
        <taxon>Pezizomycotina</taxon>
        <taxon>Eurotiomycetes</taxon>
        <taxon>Eurotiomycetidae</taxon>
        <taxon>Eurotiales</taxon>
        <taxon>Aspergillaceae</taxon>
        <taxon>Aspergillus</taxon>
        <taxon>Aspergillus subgen. Fumigati</taxon>
    </lineage>
</organism>
<name>ENO_ASPFU</name>
<evidence type="ECO:0000250" key="1"/>
<evidence type="ECO:0000269" key="2">
    <source>
    </source>
</evidence>
<evidence type="ECO:0000305" key="3"/>
<evidence type="ECO:0007829" key="4">
    <source>
        <dbReference type="PDB" id="7RHV"/>
    </source>
</evidence>
<evidence type="ECO:0007829" key="5">
    <source>
        <dbReference type="PDB" id="7RHW"/>
    </source>
</evidence>
<evidence type="ECO:0007829" key="6">
    <source>
        <dbReference type="PDB" id="7RI0"/>
    </source>
</evidence>
<feature type="initiator methionine" description="Removed" evidence="2">
    <location>
        <position position="1"/>
    </location>
</feature>
<feature type="chain" id="PRO_0000134041" description="Enolase">
    <location>
        <begin position="2"/>
        <end position="438"/>
    </location>
</feature>
<feature type="active site" description="Proton donor" evidence="1">
    <location>
        <position position="211"/>
    </location>
</feature>
<feature type="active site" description="Proton acceptor" evidence="1">
    <location>
        <position position="347"/>
    </location>
</feature>
<feature type="binding site" evidence="1">
    <location>
        <position position="159"/>
    </location>
    <ligand>
        <name>substrate</name>
    </ligand>
</feature>
<feature type="binding site" evidence="1">
    <location>
        <position position="168"/>
    </location>
    <ligand>
        <name>substrate</name>
    </ligand>
</feature>
<feature type="binding site" evidence="1">
    <location>
        <position position="246"/>
    </location>
    <ligand>
        <name>Mg(2+)</name>
        <dbReference type="ChEBI" id="CHEBI:18420"/>
    </ligand>
</feature>
<feature type="binding site" evidence="1">
    <location>
        <position position="297"/>
    </location>
    <ligand>
        <name>Mg(2+)</name>
        <dbReference type="ChEBI" id="CHEBI:18420"/>
    </ligand>
</feature>
<feature type="binding site" evidence="1">
    <location>
        <position position="297"/>
    </location>
    <ligand>
        <name>substrate</name>
    </ligand>
</feature>
<feature type="binding site" evidence="1">
    <location>
        <position position="322"/>
    </location>
    <ligand>
        <name>Mg(2+)</name>
        <dbReference type="ChEBI" id="CHEBI:18420"/>
    </ligand>
</feature>
<feature type="binding site" evidence="1">
    <location>
        <position position="322"/>
    </location>
    <ligand>
        <name>substrate</name>
    </ligand>
</feature>
<feature type="binding site" evidence="1">
    <location>
        <begin position="374"/>
        <end position="377"/>
    </location>
    <ligand>
        <name>substrate</name>
    </ligand>
</feature>
<feature type="binding site" evidence="1">
    <location>
        <position position="398"/>
    </location>
    <ligand>
        <name>substrate</name>
    </ligand>
</feature>
<feature type="sequence conflict" description="In Ref. 1; AAK49451." evidence="3" ref="1">
    <original>V</original>
    <variation>A</variation>
    <location>
        <position position="25"/>
    </location>
</feature>
<feature type="sequence conflict" description="In Ref. 1; AAK49451." evidence="3" ref="1">
    <original>A</original>
    <variation>T</variation>
    <location>
        <position position="425"/>
    </location>
</feature>
<feature type="strand" evidence="5">
    <location>
        <begin position="5"/>
        <end position="12"/>
    </location>
</feature>
<feature type="strand" evidence="5">
    <location>
        <begin position="18"/>
        <end position="26"/>
    </location>
</feature>
<feature type="strand" evidence="5">
    <location>
        <begin position="29"/>
        <end position="34"/>
    </location>
</feature>
<feature type="strand" evidence="4">
    <location>
        <begin position="40"/>
        <end position="42"/>
    </location>
</feature>
<feature type="strand" evidence="6">
    <location>
        <begin position="43"/>
        <end position="45"/>
    </location>
</feature>
<feature type="helix" evidence="5">
    <location>
        <begin position="57"/>
        <end position="59"/>
    </location>
</feature>
<feature type="helix" evidence="5">
    <location>
        <begin position="63"/>
        <end position="71"/>
    </location>
</feature>
<feature type="helix" evidence="5">
    <location>
        <begin position="73"/>
        <end position="80"/>
    </location>
</feature>
<feature type="helix" evidence="5">
    <location>
        <begin position="87"/>
        <end position="98"/>
    </location>
</feature>
<feature type="strand" evidence="5">
    <location>
        <begin position="100"/>
        <end position="102"/>
    </location>
</feature>
<feature type="turn" evidence="5">
    <location>
        <begin position="104"/>
        <end position="106"/>
    </location>
</feature>
<feature type="helix" evidence="5">
    <location>
        <begin position="108"/>
        <end position="126"/>
    </location>
</feature>
<feature type="helix" evidence="5">
    <location>
        <begin position="130"/>
        <end position="138"/>
    </location>
</feature>
<feature type="strand" evidence="5">
    <location>
        <begin position="142"/>
        <end position="146"/>
    </location>
</feature>
<feature type="strand" evidence="5">
    <location>
        <begin position="148"/>
        <end position="155"/>
    </location>
</feature>
<feature type="helix" evidence="5">
    <location>
        <begin position="157"/>
        <end position="159"/>
    </location>
</feature>
<feature type="strand" evidence="5">
    <location>
        <begin position="160"/>
        <end position="163"/>
    </location>
</feature>
<feature type="strand" evidence="5">
    <location>
        <begin position="168"/>
        <end position="172"/>
    </location>
</feature>
<feature type="strand" evidence="5">
    <location>
        <begin position="175"/>
        <end position="178"/>
    </location>
</feature>
<feature type="helix" evidence="5">
    <location>
        <begin position="179"/>
        <end position="201"/>
    </location>
</feature>
<feature type="helix" evidence="5">
    <location>
        <begin position="203"/>
        <end position="206"/>
    </location>
</feature>
<feature type="helix" evidence="5">
    <location>
        <begin position="221"/>
        <end position="234"/>
    </location>
</feature>
<feature type="turn" evidence="5">
    <location>
        <begin position="238"/>
        <end position="240"/>
    </location>
</feature>
<feature type="strand" evidence="5">
    <location>
        <begin position="242"/>
        <end position="246"/>
    </location>
</feature>
<feature type="helix" evidence="5">
    <location>
        <begin position="249"/>
        <end position="252"/>
    </location>
</feature>
<feature type="turn" evidence="5">
    <location>
        <begin position="255"/>
        <end position="258"/>
    </location>
</feature>
<feature type="strand" evidence="4">
    <location>
        <begin position="259"/>
        <end position="261"/>
    </location>
</feature>
<feature type="turn" evidence="5">
    <location>
        <begin position="262"/>
        <end position="265"/>
    </location>
</feature>
<feature type="helix" evidence="5">
    <location>
        <begin position="271"/>
        <end position="273"/>
    </location>
</feature>
<feature type="helix" evidence="5">
    <location>
        <begin position="277"/>
        <end position="290"/>
    </location>
</feature>
<feature type="strand" evidence="5">
    <location>
        <begin position="293"/>
        <end position="297"/>
    </location>
</feature>
<feature type="helix" evidence="5">
    <location>
        <begin position="305"/>
        <end position="314"/>
    </location>
</feature>
<feature type="strand" evidence="5">
    <location>
        <begin position="317"/>
        <end position="322"/>
    </location>
</feature>
<feature type="turn" evidence="5">
    <location>
        <begin position="323"/>
        <end position="327"/>
    </location>
</feature>
<feature type="helix" evidence="5">
    <location>
        <begin position="329"/>
        <end position="337"/>
    </location>
</feature>
<feature type="strand" evidence="5">
    <location>
        <begin position="342"/>
        <end position="346"/>
    </location>
</feature>
<feature type="helix" evidence="5">
    <location>
        <begin position="348"/>
        <end position="351"/>
    </location>
</feature>
<feature type="helix" evidence="5">
    <location>
        <begin position="354"/>
        <end position="366"/>
    </location>
</feature>
<feature type="strand" evidence="5">
    <location>
        <begin position="370"/>
        <end position="374"/>
    </location>
</feature>
<feature type="helix" evidence="5">
    <location>
        <begin position="384"/>
        <end position="391"/>
    </location>
</feature>
<feature type="strand" evidence="5">
    <location>
        <begin position="396"/>
        <end position="398"/>
    </location>
</feature>
<feature type="helix" evidence="5">
    <location>
        <begin position="405"/>
        <end position="421"/>
    </location>
</feature>
<feature type="helix" evidence="5">
    <location>
        <begin position="422"/>
        <end position="424"/>
    </location>
</feature>
<feature type="strand" evidence="5">
    <location>
        <begin position="425"/>
        <end position="427"/>
    </location>
</feature>
<feature type="helix" evidence="5">
    <location>
        <begin position="429"/>
        <end position="437"/>
    </location>
</feature>
<reference key="1">
    <citation type="journal article" date="2002" name="Int. Arch. Allergy Immunol.">
        <title>cDNA cloning and immunological characterization of a newly identified enolase allergen from Penicillium citrinum and Aspergillus fumigatus.</title>
        <authorList>
            <person name="Lai H.-Y."/>
            <person name="Tam M.F."/>
            <person name="Tang R.-B."/>
            <person name="Chou H."/>
            <person name="Chang C.-Y."/>
            <person name="Tsai J.-J."/>
            <person name="Shen H.-D."/>
        </authorList>
    </citation>
    <scope>NUCLEOTIDE SEQUENCE [MRNA]</scope>
    <scope>PROTEIN SEQUENCE OF 2-22</scope>
    <scope>ALLERGEN</scope>
    <source>
        <strain>CCRC 33476</strain>
    </source>
</reference>
<reference key="2">
    <citation type="journal article" date="2005" name="Nature">
        <title>Genomic sequence of the pathogenic and allergenic filamentous fungus Aspergillus fumigatus.</title>
        <authorList>
            <person name="Nierman W.C."/>
            <person name="Pain A."/>
            <person name="Anderson M.J."/>
            <person name="Wortman J.R."/>
            <person name="Kim H.S."/>
            <person name="Arroyo J."/>
            <person name="Berriman M."/>
            <person name="Abe K."/>
            <person name="Archer D.B."/>
            <person name="Bermejo C."/>
            <person name="Bennett J.W."/>
            <person name="Bowyer P."/>
            <person name="Chen D."/>
            <person name="Collins M."/>
            <person name="Coulsen R."/>
            <person name="Davies R."/>
            <person name="Dyer P.S."/>
            <person name="Farman M.L."/>
            <person name="Fedorova N."/>
            <person name="Fedorova N.D."/>
            <person name="Feldblyum T.V."/>
            <person name="Fischer R."/>
            <person name="Fosker N."/>
            <person name="Fraser A."/>
            <person name="Garcia J.L."/>
            <person name="Garcia M.J."/>
            <person name="Goble A."/>
            <person name="Goldman G.H."/>
            <person name="Gomi K."/>
            <person name="Griffith-Jones S."/>
            <person name="Gwilliam R."/>
            <person name="Haas B.J."/>
            <person name="Haas H."/>
            <person name="Harris D.E."/>
            <person name="Horiuchi H."/>
            <person name="Huang J."/>
            <person name="Humphray S."/>
            <person name="Jimenez J."/>
            <person name="Keller N."/>
            <person name="Khouri H."/>
            <person name="Kitamoto K."/>
            <person name="Kobayashi T."/>
            <person name="Konzack S."/>
            <person name="Kulkarni R."/>
            <person name="Kumagai T."/>
            <person name="Lafton A."/>
            <person name="Latge J.-P."/>
            <person name="Li W."/>
            <person name="Lord A."/>
            <person name="Lu C."/>
            <person name="Majoros W.H."/>
            <person name="May G.S."/>
            <person name="Miller B.L."/>
            <person name="Mohamoud Y."/>
            <person name="Molina M."/>
            <person name="Monod M."/>
            <person name="Mouyna I."/>
            <person name="Mulligan S."/>
            <person name="Murphy L.D."/>
            <person name="O'Neil S."/>
            <person name="Paulsen I."/>
            <person name="Penalva M.A."/>
            <person name="Pertea M."/>
            <person name="Price C."/>
            <person name="Pritchard B.L."/>
            <person name="Quail M.A."/>
            <person name="Rabbinowitsch E."/>
            <person name="Rawlins N."/>
            <person name="Rajandream M.A."/>
            <person name="Reichard U."/>
            <person name="Renauld H."/>
            <person name="Robson G.D."/>
            <person name="Rodriguez de Cordoba S."/>
            <person name="Rodriguez-Pena J.M."/>
            <person name="Ronning C.M."/>
            <person name="Rutter S."/>
            <person name="Salzberg S.L."/>
            <person name="Sanchez M."/>
            <person name="Sanchez-Ferrero J.C."/>
            <person name="Saunders D."/>
            <person name="Seeger K."/>
            <person name="Squares R."/>
            <person name="Squares S."/>
            <person name="Takeuchi M."/>
            <person name="Tekaia F."/>
            <person name="Turner G."/>
            <person name="Vazquez de Aldana C.R."/>
            <person name="Weidman J."/>
            <person name="White O."/>
            <person name="Woodward J.R."/>
            <person name="Yu J.-H."/>
            <person name="Fraser C.M."/>
            <person name="Galagan J.E."/>
            <person name="Asai K."/>
            <person name="Machida M."/>
            <person name="Hall N."/>
            <person name="Barrell B.G."/>
            <person name="Denning D.W."/>
        </authorList>
    </citation>
    <scope>NUCLEOTIDE SEQUENCE [LARGE SCALE GENOMIC DNA]</scope>
    <source>
        <strain>ATCC MYA-4609 / CBS 101355 / FGSC A1100 / Af293</strain>
    </source>
</reference>
<proteinExistence type="evidence at protein level"/>
<comment type="catalytic activity">
    <reaction>
        <text>(2R)-2-phosphoglycerate = phosphoenolpyruvate + H2O</text>
        <dbReference type="Rhea" id="RHEA:10164"/>
        <dbReference type="ChEBI" id="CHEBI:15377"/>
        <dbReference type="ChEBI" id="CHEBI:58289"/>
        <dbReference type="ChEBI" id="CHEBI:58702"/>
        <dbReference type="EC" id="4.2.1.11"/>
    </reaction>
</comment>
<comment type="cofactor">
    <cofactor evidence="1">
        <name>Mg(2+)</name>
        <dbReference type="ChEBI" id="CHEBI:18420"/>
    </cofactor>
    <text evidence="1">Mg(2+) is required for catalysis and for stabilizing the dimer.</text>
</comment>
<comment type="pathway">
    <text>Carbohydrate degradation; glycolysis; pyruvate from D-glyceraldehyde 3-phosphate: step 4/5.</text>
</comment>
<comment type="subunit">
    <text evidence="1">Homodimer.</text>
</comment>
<comment type="subcellular location">
    <subcellularLocation>
        <location evidence="1">Cytoplasm</location>
    </subcellularLocation>
</comment>
<comment type="allergen">
    <text evidence="2">Causes an allergic reaction in human. Binds to IgE.</text>
</comment>
<comment type="similarity">
    <text evidence="3">Belongs to the enolase family.</text>
</comment>
<dbReference type="EC" id="4.2.1.11"/>
<dbReference type="EMBL" id="AF284645">
    <property type="protein sequence ID" value="AAK49451.1"/>
    <property type="molecule type" value="mRNA"/>
</dbReference>
<dbReference type="EMBL" id="AAHF01000006">
    <property type="protein sequence ID" value="EAL88532.1"/>
    <property type="molecule type" value="Genomic_DNA"/>
</dbReference>
<dbReference type="RefSeq" id="XP_750570.1">
    <property type="nucleotide sequence ID" value="XM_745477.1"/>
</dbReference>
<dbReference type="PDB" id="7RHV">
    <property type="method" value="X-ray"/>
    <property type="resolution" value="2.00 A"/>
    <property type="chains" value="A/B=1-438"/>
</dbReference>
<dbReference type="PDB" id="7RHW">
    <property type="method" value="X-ray"/>
    <property type="resolution" value="1.90 A"/>
    <property type="chains" value="A/B=1-438"/>
</dbReference>
<dbReference type="PDB" id="7RI0">
    <property type="method" value="X-ray"/>
    <property type="resolution" value="2.30 A"/>
    <property type="chains" value="A/B=1-438"/>
</dbReference>
<dbReference type="PDBsum" id="7RHV"/>
<dbReference type="PDBsum" id="7RHW"/>
<dbReference type="PDBsum" id="7RI0"/>
<dbReference type="SMR" id="Q96X30"/>
<dbReference type="FunCoup" id="Q96X30">
    <property type="interactions" value="1114"/>
</dbReference>
<dbReference type="STRING" id="330879.Q96X30"/>
<dbReference type="Allergome" id="3116">
    <property type="allergen name" value="Asp f 22.0101"/>
</dbReference>
<dbReference type="Allergome" id="72">
    <property type="allergen name" value="Asp f 22"/>
</dbReference>
<dbReference type="SwissPalm" id="Q96X30"/>
<dbReference type="EnsemblFungi" id="EAL88532">
    <property type="protein sequence ID" value="EAL88532"/>
    <property type="gene ID" value="AFUA_6G06770"/>
</dbReference>
<dbReference type="GeneID" id="3508747"/>
<dbReference type="KEGG" id="afm:AFUA_6G06770"/>
<dbReference type="VEuPathDB" id="FungiDB:Afu6g06770"/>
<dbReference type="eggNOG" id="KOG2670">
    <property type="taxonomic scope" value="Eukaryota"/>
</dbReference>
<dbReference type="HOGENOM" id="CLU_031223_0_0_1"/>
<dbReference type="InParanoid" id="Q96X30"/>
<dbReference type="OMA" id="RCMMSHR"/>
<dbReference type="OrthoDB" id="1739814at2759"/>
<dbReference type="UniPathway" id="UPA00109">
    <property type="reaction ID" value="UER00187"/>
</dbReference>
<dbReference type="Proteomes" id="UP000002530">
    <property type="component" value="Chromosome 6"/>
</dbReference>
<dbReference type="GO" id="GO:0000015">
    <property type="term" value="C:phosphopyruvate hydratase complex"/>
    <property type="evidence" value="ECO:0000318"/>
    <property type="project" value="GO_Central"/>
</dbReference>
<dbReference type="GO" id="GO:0019863">
    <property type="term" value="F:IgE binding"/>
    <property type="evidence" value="ECO:0000314"/>
    <property type="project" value="AspGD"/>
</dbReference>
<dbReference type="GO" id="GO:0000287">
    <property type="term" value="F:magnesium ion binding"/>
    <property type="evidence" value="ECO:0007669"/>
    <property type="project" value="InterPro"/>
</dbReference>
<dbReference type="GO" id="GO:0004634">
    <property type="term" value="F:phosphopyruvate hydratase activity"/>
    <property type="evidence" value="ECO:0000318"/>
    <property type="project" value="GO_Central"/>
</dbReference>
<dbReference type="GO" id="GO:0006096">
    <property type="term" value="P:glycolytic process"/>
    <property type="evidence" value="ECO:0000318"/>
    <property type="project" value="GO_Central"/>
</dbReference>
<dbReference type="CDD" id="cd03313">
    <property type="entry name" value="enolase"/>
    <property type="match status" value="1"/>
</dbReference>
<dbReference type="FunFam" id="3.30.390.10:FF:000001">
    <property type="entry name" value="Enolase"/>
    <property type="match status" value="1"/>
</dbReference>
<dbReference type="FunFam" id="3.20.20.120:FF:000002">
    <property type="entry name" value="Enolase 1"/>
    <property type="match status" value="1"/>
</dbReference>
<dbReference type="Gene3D" id="3.20.20.120">
    <property type="entry name" value="Enolase-like C-terminal domain"/>
    <property type="match status" value="1"/>
</dbReference>
<dbReference type="Gene3D" id="3.30.390.10">
    <property type="entry name" value="Enolase-like, N-terminal domain"/>
    <property type="match status" value="1"/>
</dbReference>
<dbReference type="HAMAP" id="MF_00318">
    <property type="entry name" value="Enolase"/>
    <property type="match status" value="1"/>
</dbReference>
<dbReference type="InterPro" id="IPR000941">
    <property type="entry name" value="Enolase"/>
</dbReference>
<dbReference type="InterPro" id="IPR036849">
    <property type="entry name" value="Enolase-like_C_sf"/>
</dbReference>
<dbReference type="InterPro" id="IPR029017">
    <property type="entry name" value="Enolase-like_N"/>
</dbReference>
<dbReference type="InterPro" id="IPR020810">
    <property type="entry name" value="Enolase_C"/>
</dbReference>
<dbReference type="InterPro" id="IPR020809">
    <property type="entry name" value="Enolase_CS"/>
</dbReference>
<dbReference type="InterPro" id="IPR020811">
    <property type="entry name" value="Enolase_N"/>
</dbReference>
<dbReference type="NCBIfam" id="TIGR01060">
    <property type="entry name" value="eno"/>
    <property type="match status" value="1"/>
</dbReference>
<dbReference type="PANTHER" id="PTHR11902">
    <property type="entry name" value="ENOLASE"/>
    <property type="match status" value="1"/>
</dbReference>
<dbReference type="PANTHER" id="PTHR11902:SF1">
    <property type="entry name" value="ENOLASE"/>
    <property type="match status" value="1"/>
</dbReference>
<dbReference type="Pfam" id="PF00113">
    <property type="entry name" value="Enolase_C"/>
    <property type="match status" value="1"/>
</dbReference>
<dbReference type="Pfam" id="PF03952">
    <property type="entry name" value="Enolase_N"/>
    <property type="match status" value="1"/>
</dbReference>
<dbReference type="PIRSF" id="PIRSF001400">
    <property type="entry name" value="Enolase"/>
    <property type="match status" value="1"/>
</dbReference>
<dbReference type="PRINTS" id="PR00148">
    <property type="entry name" value="ENOLASE"/>
</dbReference>
<dbReference type="SFLD" id="SFLDS00001">
    <property type="entry name" value="Enolase"/>
    <property type="match status" value="1"/>
</dbReference>
<dbReference type="SFLD" id="SFLDF00002">
    <property type="entry name" value="enolase"/>
    <property type="match status" value="1"/>
</dbReference>
<dbReference type="SMART" id="SM01192">
    <property type="entry name" value="Enolase_C"/>
    <property type="match status" value="1"/>
</dbReference>
<dbReference type="SMART" id="SM01193">
    <property type="entry name" value="Enolase_N"/>
    <property type="match status" value="1"/>
</dbReference>
<dbReference type="SUPFAM" id="SSF51604">
    <property type="entry name" value="Enolase C-terminal domain-like"/>
    <property type="match status" value="1"/>
</dbReference>
<dbReference type="SUPFAM" id="SSF54826">
    <property type="entry name" value="Enolase N-terminal domain-like"/>
    <property type="match status" value="1"/>
</dbReference>
<dbReference type="PROSITE" id="PS00164">
    <property type="entry name" value="ENOLASE"/>
    <property type="match status" value="1"/>
</dbReference>
<keyword id="KW-0002">3D-structure</keyword>
<keyword id="KW-0020">Allergen</keyword>
<keyword id="KW-0963">Cytoplasm</keyword>
<keyword id="KW-0903">Direct protein sequencing</keyword>
<keyword id="KW-0324">Glycolysis</keyword>
<keyword id="KW-0456">Lyase</keyword>
<keyword id="KW-0460">Magnesium</keyword>
<keyword id="KW-0479">Metal-binding</keyword>
<keyword id="KW-1185">Reference proteome</keyword>
<sequence length="438" mass="47305">MPISKIHARSVYDSRGNPTVEVDVVTETGLHRAIVPSGASTGQHEAHELRDGDKTQWGGKGVLKAVKNVNETIGPALIKENIDVKDQSKVDEFLNKLDGTANKSNLGANAILGVSLAVAKAGAAEKGVPLYAHISDLAGTKKPYVLPVPFQNVLNGGSHAGGRLAFQEFMIVPDSAPSFSEALRQGAEVYQKLKALAKKKYGQSAGNVGDEGGVAPDIQTAEEALDLITEAIEQAGYTGKIKIAMDVASSEFYKADVKKYDLDFKNPESDPSKWLTYEQLADLYKSLAAKYPIVSIEDPFAEDDWEAWSYFYKTSDFQIVGDDLTVTNPGRIKKAIELKSCNALLLKVNQIGTLTESIQAAKDSYADNWGVMVSHRSGETEDVTIADIAVGLRSGQIKTGAPCRSERLAKLNQILRIEEELGENAVYAGSKFRTAVNL</sequence>
<gene>
    <name type="primary">enoA</name>
    <name type="ORF">AFUA_6G06770</name>
</gene>
<accession>Q96X30</accession>
<accession>Q4WND2</accession>
<protein>
    <recommendedName>
        <fullName>Enolase</fullName>
        <ecNumber>4.2.1.11</ecNumber>
    </recommendedName>
    <alternativeName>
        <fullName>2-phospho-D-glycerate hydro-lyase</fullName>
    </alternativeName>
    <alternativeName>
        <fullName>2-phosphoglycerate dehydratase</fullName>
    </alternativeName>
    <allergenName>Asp f 22</allergenName>
</protein>